<gene>
    <name evidence="1" type="primary">rpsF</name>
    <name type="ordered locus">VS_0280</name>
</gene>
<organism>
    <name type="scientific">Vibrio atlanticus (strain LGP32)</name>
    <name type="common">Vibrio splendidus (strain Mel32)</name>
    <dbReference type="NCBI Taxonomy" id="575788"/>
    <lineage>
        <taxon>Bacteria</taxon>
        <taxon>Pseudomonadati</taxon>
        <taxon>Pseudomonadota</taxon>
        <taxon>Gammaproteobacteria</taxon>
        <taxon>Vibrionales</taxon>
        <taxon>Vibrionaceae</taxon>
        <taxon>Vibrio</taxon>
    </lineage>
</organism>
<comment type="function">
    <text evidence="1">Binds together with bS18 to 16S ribosomal RNA.</text>
</comment>
<comment type="similarity">
    <text evidence="1">Belongs to the bacterial ribosomal protein bS6 family.</text>
</comment>
<feature type="chain" id="PRO_1000133555" description="Small ribosomal subunit protein bS6">
    <location>
        <begin position="1"/>
        <end position="137"/>
    </location>
</feature>
<feature type="region of interest" description="Disordered" evidence="2">
    <location>
        <begin position="96"/>
        <end position="137"/>
    </location>
</feature>
<feature type="compositionally biased region" description="Basic and acidic residues" evidence="2">
    <location>
        <begin position="104"/>
        <end position="137"/>
    </location>
</feature>
<dbReference type="EMBL" id="FM954972">
    <property type="protein sequence ID" value="CAV17302.1"/>
    <property type="molecule type" value="Genomic_DNA"/>
</dbReference>
<dbReference type="SMR" id="B7VI65"/>
<dbReference type="STRING" id="575788.VS_0280"/>
<dbReference type="KEGG" id="vsp:VS_0280"/>
<dbReference type="eggNOG" id="COG0360">
    <property type="taxonomic scope" value="Bacteria"/>
</dbReference>
<dbReference type="HOGENOM" id="CLU_113441_6_0_6"/>
<dbReference type="Proteomes" id="UP000009100">
    <property type="component" value="Chromosome 1"/>
</dbReference>
<dbReference type="GO" id="GO:0022627">
    <property type="term" value="C:cytosolic small ribosomal subunit"/>
    <property type="evidence" value="ECO:0007669"/>
    <property type="project" value="TreeGrafter"/>
</dbReference>
<dbReference type="GO" id="GO:0070181">
    <property type="term" value="F:small ribosomal subunit rRNA binding"/>
    <property type="evidence" value="ECO:0007669"/>
    <property type="project" value="TreeGrafter"/>
</dbReference>
<dbReference type="GO" id="GO:0003735">
    <property type="term" value="F:structural constituent of ribosome"/>
    <property type="evidence" value="ECO:0007669"/>
    <property type="project" value="InterPro"/>
</dbReference>
<dbReference type="GO" id="GO:0006412">
    <property type="term" value="P:translation"/>
    <property type="evidence" value="ECO:0007669"/>
    <property type="project" value="UniProtKB-UniRule"/>
</dbReference>
<dbReference type="CDD" id="cd00473">
    <property type="entry name" value="bS6"/>
    <property type="match status" value="1"/>
</dbReference>
<dbReference type="FunFam" id="3.30.70.60:FF:000003">
    <property type="entry name" value="30S ribosomal protein S6"/>
    <property type="match status" value="1"/>
</dbReference>
<dbReference type="Gene3D" id="3.30.70.60">
    <property type="match status" value="1"/>
</dbReference>
<dbReference type="HAMAP" id="MF_00360">
    <property type="entry name" value="Ribosomal_bS6"/>
    <property type="match status" value="1"/>
</dbReference>
<dbReference type="InterPro" id="IPR000529">
    <property type="entry name" value="Ribosomal_bS6"/>
</dbReference>
<dbReference type="InterPro" id="IPR035980">
    <property type="entry name" value="Ribosomal_bS6_sf"/>
</dbReference>
<dbReference type="InterPro" id="IPR020814">
    <property type="entry name" value="Ribosomal_S6_plastid/chlpt"/>
</dbReference>
<dbReference type="InterPro" id="IPR014717">
    <property type="entry name" value="Transl_elong_EF1B/ribsomal_bS6"/>
</dbReference>
<dbReference type="NCBIfam" id="TIGR00166">
    <property type="entry name" value="S6"/>
    <property type="match status" value="1"/>
</dbReference>
<dbReference type="PANTHER" id="PTHR21011">
    <property type="entry name" value="MITOCHONDRIAL 28S RIBOSOMAL PROTEIN S6"/>
    <property type="match status" value="1"/>
</dbReference>
<dbReference type="PANTHER" id="PTHR21011:SF1">
    <property type="entry name" value="SMALL RIBOSOMAL SUBUNIT PROTEIN BS6M"/>
    <property type="match status" value="1"/>
</dbReference>
<dbReference type="Pfam" id="PF01250">
    <property type="entry name" value="Ribosomal_S6"/>
    <property type="match status" value="1"/>
</dbReference>
<dbReference type="SUPFAM" id="SSF54995">
    <property type="entry name" value="Ribosomal protein S6"/>
    <property type="match status" value="1"/>
</dbReference>
<reference key="1">
    <citation type="submission" date="2009-02" db="EMBL/GenBank/DDBJ databases">
        <title>Vibrio splendidus str. LGP32 complete genome.</title>
        <authorList>
            <person name="Mazel D."/>
            <person name="Le Roux F."/>
        </authorList>
    </citation>
    <scope>NUCLEOTIDE SEQUENCE [LARGE SCALE GENOMIC DNA]</scope>
    <source>
        <strain>LGP32</strain>
    </source>
</reference>
<proteinExistence type="inferred from homology"/>
<name>RS6_VIBA3</name>
<keyword id="KW-0687">Ribonucleoprotein</keyword>
<keyword id="KW-0689">Ribosomal protein</keyword>
<keyword id="KW-0694">RNA-binding</keyword>
<keyword id="KW-0699">rRNA-binding</keyword>
<protein>
    <recommendedName>
        <fullName evidence="1">Small ribosomal subunit protein bS6</fullName>
    </recommendedName>
    <alternativeName>
        <fullName evidence="3">30S ribosomal protein S6</fullName>
    </alternativeName>
</protein>
<sequence length="137" mass="16014">MRHYEIVFMVHPDQSEQVAGMIERYTGSITEAGGTIHRLEDWGRRQMAYPINKLHKAHYVLMNVEAGQEVMDELETAFRFNDAVLRNMIMRTKGAVTEQSIMLKQKEERAERAPRRDDREERAPRREEEAKPEAAAE</sequence>
<accession>B7VI65</accession>
<evidence type="ECO:0000255" key="1">
    <source>
        <dbReference type="HAMAP-Rule" id="MF_00360"/>
    </source>
</evidence>
<evidence type="ECO:0000256" key="2">
    <source>
        <dbReference type="SAM" id="MobiDB-lite"/>
    </source>
</evidence>
<evidence type="ECO:0000305" key="3"/>